<protein>
    <recommendedName>
        <fullName>Nuclear fusion protein tht1</fullName>
    </recommendedName>
    <alternativeName>
        <fullName>Twin horsetail protein 1</fullName>
    </alternativeName>
</protein>
<feature type="signal peptide" evidence="1">
    <location>
        <begin position="1"/>
        <end position="29"/>
    </location>
</feature>
<feature type="chain" id="PRO_0000072529" description="Nuclear fusion protein tht1">
    <location>
        <begin position="30"/>
        <end position="577"/>
    </location>
</feature>
<feature type="topological domain" description="Lumenal" evidence="2">
    <location>
        <begin position="30"/>
        <end position="404"/>
    </location>
</feature>
<feature type="transmembrane region" description="Helical" evidence="1">
    <location>
        <begin position="405"/>
        <end position="425"/>
    </location>
</feature>
<feature type="topological domain" description="Cytoplasmic" evidence="2">
    <location>
        <begin position="426"/>
        <end position="433"/>
    </location>
</feature>
<feature type="transmembrane region" description="Helical" evidence="1">
    <location>
        <begin position="434"/>
        <end position="454"/>
    </location>
</feature>
<feature type="topological domain" description="Lumenal" evidence="2">
    <location>
        <begin position="455"/>
        <end position="470"/>
    </location>
</feature>
<feature type="transmembrane region" description="Helical" evidence="1">
    <location>
        <begin position="471"/>
        <end position="491"/>
    </location>
</feature>
<feature type="topological domain" description="Cytoplasmic" evidence="2">
    <location>
        <begin position="492"/>
        <end position="577"/>
    </location>
</feature>
<feature type="glycosylation site" description="N-linked (GlcNAc...) asparagine" evidence="1">
    <location>
        <position position="163"/>
    </location>
</feature>
<feature type="glycosylation site" description="N-linked (GlcNAc...) asparagine" evidence="1">
    <location>
        <position position="372"/>
    </location>
</feature>
<name>KAR5_SCHPO</name>
<comment type="function">
    <text evidence="2">Required for nuclear membrane fusion during karyogamy.</text>
</comment>
<comment type="subcellular location">
    <subcellularLocation>
        <location evidence="2">Endoplasmic reticulum membrane</location>
        <topology evidence="2">Multi-pass membrane protein</topology>
    </subcellularLocation>
    <subcellularLocation>
        <location evidence="2">Nucleus membrane</location>
        <topology evidence="2">Multi-pass membrane protein</topology>
    </subcellularLocation>
</comment>
<comment type="induction">
    <text evidence="2">During conjugation.</text>
</comment>
<comment type="PTM">
    <text evidence="2">N-glycosylated.</text>
</comment>
<comment type="similarity">
    <text evidence="3">Belongs to the KAR5 family.</text>
</comment>
<comment type="sequence caution" evidence="3">
    <conflict type="erroneous initiation">
        <sequence resource="EMBL-CDS" id="CAA90454"/>
    </conflict>
</comment>
<keyword id="KW-0256">Endoplasmic reticulum</keyword>
<keyword id="KW-0325">Glycoprotein</keyword>
<keyword id="KW-0415">Karyogamy</keyword>
<keyword id="KW-0472">Membrane</keyword>
<keyword id="KW-0539">Nucleus</keyword>
<keyword id="KW-1185">Reference proteome</keyword>
<keyword id="KW-0732">Signal</keyword>
<keyword id="KW-0812">Transmembrane</keyword>
<keyword id="KW-1133">Transmembrane helix</keyword>
<sequence length="577" mass="66973">MKFHPTRPFGLYFEFFIIISFFFTSESTGDVESFMKYSNVAFSEGLAGFDSLAHVYQALLKKSTCYQEVAATLISKCSLLNTELTIDNRIHSAIQMTLCDFERSQILAPSECVRGSQSECVSKLESTSTWWLSFTSHFHDVNHLCRLANLEMQKELSIEVNMNVTLVQKQFLEMVILHLRNFESVTDKMNQRIDKFDGKFNSVIENSFKDINFRVNQEIMGLVELQNHQQEGMVQQKEILSTIKQLKSEIFDINSFFANFIEESAGYSNSLIEKLNEKFTSENAIALSAIGKYTSEFSAFMEKRIKNLITTTEDSLQQSVQSNIDFVNSGFQPLYDLTIQLKEELQSLKRLSSEQQNLQHEQILQWKSDFLNVSKDHLKVLQQLRPLIDIVEKFMNVYFKGLSNIISSFAFIGFTLFATLSSLFFKVLKIHRRPIIVFGSLSIIFIHIYCFKITSWVNLYGWITCTIARTLSFIKLNIRTFYLTAFLCALLNFLRYLKYRNSKKDTELSLFLPAPEECNIYHNEHIQVQEDNYLCPIENSLIDLFGSENNKEKLGKQENVRFAFLNSESLEQSPWWD</sequence>
<evidence type="ECO:0000255" key="1"/>
<evidence type="ECO:0000269" key="2">
    <source>
    </source>
</evidence>
<evidence type="ECO:0000305" key="3"/>
<organism>
    <name type="scientific">Schizosaccharomyces pombe (strain 972 / ATCC 24843)</name>
    <name type="common">Fission yeast</name>
    <dbReference type="NCBI Taxonomy" id="284812"/>
    <lineage>
        <taxon>Eukaryota</taxon>
        <taxon>Fungi</taxon>
        <taxon>Dikarya</taxon>
        <taxon>Ascomycota</taxon>
        <taxon>Taphrinomycotina</taxon>
        <taxon>Schizosaccharomycetes</taxon>
        <taxon>Schizosaccharomycetales</taxon>
        <taxon>Schizosaccharomycetaceae</taxon>
        <taxon>Schizosaccharomyces</taxon>
    </lineage>
</organism>
<proteinExistence type="evidence at protein level"/>
<dbReference type="EMBL" id="D87337">
    <property type="protein sequence ID" value="BAA13334.1"/>
    <property type="molecule type" value="Genomic_DNA"/>
</dbReference>
<dbReference type="EMBL" id="CU329670">
    <property type="protein sequence ID" value="CAA90454.1"/>
    <property type="status" value="ALT_INIT"/>
    <property type="molecule type" value="Genomic_DNA"/>
</dbReference>
<dbReference type="PIR" id="T43207">
    <property type="entry name" value="T43207"/>
</dbReference>
<dbReference type="RefSeq" id="NP_592931.1">
    <property type="nucleotide sequence ID" value="NM_001018332.2"/>
</dbReference>
<dbReference type="SMR" id="Q09684"/>
<dbReference type="FunCoup" id="Q09684">
    <property type="interactions" value="95"/>
</dbReference>
<dbReference type="STRING" id="284812.Q09684"/>
<dbReference type="GlyCosmos" id="Q09684">
    <property type="glycosylation" value="2 sites, No reported glycans"/>
</dbReference>
<dbReference type="iPTMnet" id="Q09684"/>
<dbReference type="SwissPalm" id="Q09684"/>
<dbReference type="PaxDb" id="4896-SPAC13C5.03.1"/>
<dbReference type="GeneID" id="2542365"/>
<dbReference type="KEGG" id="spo:2542365"/>
<dbReference type="PomBase" id="SPAC13C5.03">
    <property type="gene designation" value="tht1"/>
</dbReference>
<dbReference type="eggNOG" id="ENOG502QVCQ">
    <property type="taxonomic scope" value="Eukaryota"/>
</dbReference>
<dbReference type="HOGENOM" id="CLU_475796_0_0_1"/>
<dbReference type="InParanoid" id="Q09684"/>
<dbReference type="PhylomeDB" id="Q09684"/>
<dbReference type="PRO" id="PR:Q09684"/>
<dbReference type="Proteomes" id="UP000002485">
    <property type="component" value="Chromosome I"/>
</dbReference>
<dbReference type="GO" id="GO:0005783">
    <property type="term" value="C:endoplasmic reticulum"/>
    <property type="evidence" value="ECO:0000314"/>
    <property type="project" value="PomBase"/>
</dbReference>
<dbReference type="GO" id="GO:0005789">
    <property type="term" value="C:endoplasmic reticulum membrane"/>
    <property type="evidence" value="ECO:0000318"/>
    <property type="project" value="GO_Central"/>
</dbReference>
<dbReference type="GO" id="GO:0031965">
    <property type="term" value="C:nuclear membrane"/>
    <property type="evidence" value="ECO:0000314"/>
    <property type="project" value="PomBase"/>
</dbReference>
<dbReference type="GO" id="GO:0005640">
    <property type="term" value="C:nuclear outer membrane"/>
    <property type="evidence" value="ECO:0000269"/>
    <property type="project" value="PomBase"/>
</dbReference>
<dbReference type="GO" id="GO:0000742">
    <property type="term" value="P:karyogamy involved in conjugation with cellular fusion"/>
    <property type="evidence" value="ECO:0000315"/>
    <property type="project" value="PomBase"/>
</dbReference>
<dbReference type="GO" id="GO:0048288">
    <property type="term" value="P:nuclear membrane fusion involved in karyogamy"/>
    <property type="evidence" value="ECO:0000315"/>
    <property type="project" value="PomBase"/>
</dbReference>
<dbReference type="InterPro" id="IPR007292">
    <property type="entry name" value="Nuclear_fusion_Kar5"/>
</dbReference>
<dbReference type="PANTHER" id="PTHR28012">
    <property type="entry name" value="NUCLEAR FUSION PROTEIN KAR5"/>
    <property type="match status" value="1"/>
</dbReference>
<dbReference type="PANTHER" id="PTHR28012:SF1">
    <property type="entry name" value="NUCLEAR FUSION PROTEIN KAR5"/>
    <property type="match status" value="1"/>
</dbReference>
<dbReference type="Pfam" id="PF04163">
    <property type="entry name" value="Tht1"/>
    <property type="match status" value="1"/>
</dbReference>
<gene>
    <name type="primary">tht1</name>
    <name type="synonym">kar5</name>
    <name type="ORF">SPAC13C5.03</name>
</gene>
<reference key="1">
    <citation type="journal article" date="1998" name="J. Cell Biol.">
        <title>A novel fission yeast gene, tht1+, is required for the fusion of nuclear envelopes during karyogamy.</title>
        <authorList>
            <person name="Tange Y."/>
            <person name="Horio T."/>
            <person name="Shimanuki M."/>
            <person name="Ding D.-Q."/>
            <person name="Hiraoka Y."/>
            <person name="Niwa O."/>
        </authorList>
    </citation>
    <scope>NUCLEOTIDE SEQUENCE [GENOMIC DNA]</scope>
    <scope>FUNCTION</scope>
    <scope>SUBCELLULAR LOCATION</scope>
    <scope>TOPOLOGY</scope>
    <scope>INDUCTION</scope>
    <scope>GLYCOSYLATION</scope>
</reference>
<reference key="2">
    <citation type="journal article" date="2002" name="Nature">
        <title>The genome sequence of Schizosaccharomyces pombe.</title>
        <authorList>
            <person name="Wood V."/>
            <person name="Gwilliam R."/>
            <person name="Rajandream M.A."/>
            <person name="Lyne M.H."/>
            <person name="Lyne R."/>
            <person name="Stewart A."/>
            <person name="Sgouros J.G."/>
            <person name="Peat N."/>
            <person name="Hayles J."/>
            <person name="Baker S.G."/>
            <person name="Basham D."/>
            <person name="Bowman S."/>
            <person name="Brooks K."/>
            <person name="Brown D."/>
            <person name="Brown S."/>
            <person name="Chillingworth T."/>
            <person name="Churcher C.M."/>
            <person name="Collins M."/>
            <person name="Connor R."/>
            <person name="Cronin A."/>
            <person name="Davis P."/>
            <person name="Feltwell T."/>
            <person name="Fraser A."/>
            <person name="Gentles S."/>
            <person name="Goble A."/>
            <person name="Hamlin N."/>
            <person name="Harris D.E."/>
            <person name="Hidalgo J."/>
            <person name="Hodgson G."/>
            <person name="Holroyd S."/>
            <person name="Hornsby T."/>
            <person name="Howarth S."/>
            <person name="Huckle E.J."/>
            <person name="Hunt S."/>
            <person name="Jagels K."/>
            <person name="James K.D."/>
            <person name="Jones L."/>
            <person name="Jones M."/>
            <person name="Leather S."/>
            <person name="McDonald S."/>
            <person name="McLean J."/>
            <person name="Mooney P."/>
            <person name="Moule S."/>
            <person name="Mungall K.L."/>
            <person name="Murphy L.D."/>
            <person name="Niblett D."/>
            <person name="Odell C."/>
            <person name="Oliver K."/>
            <person name="O'Neil S."/>
            <person name="Pearson D."/>
            <person name="Quail M.A."/>
            <person name="Rabbinowitsch E."/>
            <person name="Rutherford K.M."/>
            <person name="Rutter S."/>
            <person name="Saunders D."/>
            <person name="Seeger K."/>
            <person name="Sharp S."/>
            <person name="Skelton J."/>
            <person name="Simmonds M.N."/>
            <person name="Squares R."/>
            <person name="Squares S."/>
            <person name="Stevens K."/>
            <person name="Taylor K."/>
            <person name="Taylor R.G."/>
            <person name="Tivey A."/>
            <person name="Walsh S.V."/>
            <person name="Warren T."/>
            <person name="Whitehead S."/>
            <person name="Woodward J.R."/>
            <person name="Volckaert G."/>
            <person name="Aert R."/>
            <person name="Robben J."/>
            <person name="Grymonprez B."/>
            <person name="Weltjens I."/>
            <person name="Vanstreels E."/>
            <person name="Rieger M."/>
            <person name="Schaefer M."/>
            <person name="Mueller-Auer S."/>
            <person name="Gabel C."/>
            <person name="Fuchs M."/>
            <person name="Duesterhoeft A."/>
            <person name="Fritzc C."/>
            <person name="Holzer E."/>
            <person name="Moestl D."/>
            <person name="Hilbert H."/>
            <person name="Borzym K."/>
            <person name="Langer I."/>
            <person name="Beck A."/>
            <person name="Lehrach H."/>
            <person name="Reinhardt R."/>
            <person name="Pohl T.M."/>
            <person name="Eger P."/>
            <person name="Zimmermann W."/>
            <person name="Wedler H."/>
            <person name="Wambutt R."/>
            <person name="Purnelle B."/>
            <person name="Goffeau A."/>
            <person name="Cadieu E."/>
            <person name="Dreano S."/>
            <person name="Gloux S."/>
            <person name="Lelaure V."/>
            <person name="Mottier S."/>
            <person name="Galibert F."/>
            <person name="Aves S.J."/>
            <person name="Xiang Z."/>
            <person name="Hunt C."/>
            <person name="Moore K."/>
            <person name="Hurst S.M."/>
            <person name="Lucas M."/>
            <person name="Rochet M."/>
            <person name="Gaillardin C."/>
            <person name="Tallada V.A."/>
            <person name="Garzon A."/>
            <person name="Thode G."/>
            <person name="Daga R.R."/>
            <person name="Cruzado L."/>
            <person name="Jimenez J."/>
            <person name="Sanchez M."/>
            <person name="del Rey F."/>
            <person name="Benito J."/>
            <person name="Dominguez A."/>
            <person name="Revuelta J.L."/>
            <person name="Moreno S."/>
            <person name="Armstrong J."/>
            <person name="Forsburg S.L."/>
            <person name="Cerutti L."/>
            <person name="Lowe T."/>
            <person name="McCombie W.R."/>
            <person name="Paulsen I."/>
            <person name="Potashkin J."/>
            <person name="Shpakovski G.V."/>
            <person name="Ussery D."/>
            <person name="Barrell B.G."/>
            <person name="Nurse P."/>
        </authorList>
    </citation>
    <scope>NUCLEOTIDE SEQUENCE [LARGE SCALE GENOMIC DNA]</scope>
    <source>
        <strain>972 / ATCC 24843</strain>
    </source>
</reference>
<accession>Q09684</accession>